<gene>
    <name type="primary">dnaN</name>
    <name type="ordered locus">SP_0002</name>
</gene>
<keyword id="KW-0002">3D-structure</keyword>
<keyword id="KW-0963">Cytoplasm</keyword>
<keyword id="KW-0235">DNA replication</keyword>
<keyword id="KW-0238">DNA-binding</keyword>
<keyword id="KW-0239">DNA-directed DNA polymerase</keyword>
<keyword id="KW-0548">Nucleotidyltransferase</keyword>
<keyword id="KW-1185">Reference proteome</keyword>
<keyword id="KW-0808">Transferase</keyword>
<reference key="1">
    <citation type="journal article" date="1998" name="Microbiology">
        <title>Organization around the dnaA gene of Streptococcus pneumoniae.</title>
        <authorList>
            <person name="Gasc A.M."/>
            <person name="Giammarinaro P."/>
            <person name="Richter S."/>
            <person name="Sicard M."/>
        </authorList>
    </citation>
    <scope>NUCLEOTIDE SEQUENCE [GENOMIC DNA]</scope>
    <source>
        <strain>R6 / R801</strain>
    </source>
</reference>
<reference key="2">
    <citation type="journal article" date="2001" name="Science">
        <title>Complete genome sequence of a virulent isolate of Streptococcus pneumoniae.</title>
        <authorList>
            <person name="Tettelin H."/>
            <person name="Nelson K.E."/>
            <person name="Paulsen I.T."/>
            <person name="Eisen J.A."/>
            <person name="Read T.D."/>
            <person name="Peterson S.N."/>
            <person name="Heidelberg J.F."/>
            <person name="DeBoy R.T."/>
            <person name="Haft D.H."/>
            <person name="Dodson R.J."/>
            <person name="Durkin A.S."/>
            <person name="Gwinn M.L."/>
            <person name="Kolonay J.F."/>
            <person name="Nelson W.C."/>
            <person name="Peterson J.D."/>
            <person name="Umayam L.A."/>
            <person name="White O."/>
            <person name="Salzberg S.L."/>
            <person name="Lewis M.R."/>
            <person name="Radune D."/>
            <person name="Holtzapple E.K."/>
            <person name="Khouri H.M."/>
            <person name="Wolf A.M."/>
            <person name="Utterback T.R."/>
            <person name="Hansen C.L."/>
            <person name="McDonald L.A."/>
            <person name="Feldblyum T.V."/>
            <person name="Angiuoli S.V."/>
            <person name="Dickinson T."/>
            <person name="Hickey E.K."/>
            <person name="Holt I.E."/>
            <person name="Loftus B.J."/>
            <person name="Yang F."/>
            <person name="Smith H.O."/>
            <person name="Venter J.C."/>
            <person name="Dougherty B.A."/>
            <person name="Morrison D.A."/>
            <person name="Hollingshead S.K."/>
            <person name="Fraser C.M."/>
        </authorList>
    </citation>
    <scope>NUCLEOTIDE SEQUENCE [LARGE SCALE GENOMIC DNA]</scope>
    <source>
        <strain>ATCC BAA-334 / TIGR4</strain>
    </source>
</reference>
<reference evidence="3" key="3">
    <citation type="submission" date="2005-08" db="PDB data bank">
        <title>Crystal structure of DNA polymerase III, beta chain (EC 2.7.7.7) (np_344555.1) from Streptococcus pneumoniae TIGR4 at 2.50 A resolution.</title>
        <authorList>
            <consortium name="Joint Center For Structural Genomics (JCSG)"/>
        </authorList>
    </citation>
    <scope>X-RAY CRYSTALLOGRAPHY (2.50 ANGSTROMS)</scope>
    <source>
        <strain>ATCC BAA-334 / TIGR4</strain>
    </source>
</reference>
<evidence type="ECO:0000250" key="1">
    <source>
        <dbReference type="UniProtKB" id="P0A988"/>
    </source>
</evidence>
<evidence type="ECO:0000305" key="2"/>
<evidence type="ECO:0007744" key="3">
    <source>
        <dbReference type="PDB" id="2AWA"/>
    </source>
</evidence>
<evidence type="ECO:0007829" key="4">
    <source>
        <dbReference type="PDB" id="2AWA"/>
    </source>
</evidence>
<organism>
    <name type="scientific">Streptococcus pneumoniae serotype 4 (strain ATCC BAA-334 / TIGR4)</name>
    <dbReference type="NCBI Taxonomy" id="170187"/>
    <lineage>
        <taxon>Bacteria</taxon>
        <taxon>Bacillati</taxon>
        <taxon>Bacillota</taxon>
        <taxon>Bacilli</taxon>
        <taxon>Lactobacillales</taxon>
        <taxon>Streptococcaceae</taxon>
        <taxon>Streptococcus</taxon>
    </lineage>
</organism>
<sequence>MIHFSINKNLFLQALNTTKRAISSKNAIPILSTVKIDVTNEGITLIGSNGQISIENFISQKNEDAGLLITSLGSILLEASFFINVVSSLPDVTLDFKEIEQNQIVLTSGKSEITLKGKDSEQYPRIQEISASTPLILETKLLKKIINETAFAASTQESRPILTGVHFVLSQHKELKTVATDSHRLSQKKLTLEKNSDDFDVVIPSRSLREFSAVFTDDIETVEIFFANNQILFRSENISFYTRLLEGNYPDTDRLIPTDFNTTITFNVVNLRQSMERARLLSSATQNGTVKLEIKDGVVSAHVHSPEVGKVNEEIDTDQVTGEDLTISFNPTYLIDSLKALNSEKVTISFISAVRPFTLVPADTDEDFMQLITPVRTN</sequence>
<proteinExistence type="evidence at protein level"/>
<feature type="chain" id="PRO_0000105472" description="Beta sliding clamp">
    <location>
        <begin position="1"/>
        <end position="378"/>
    </location>
</feature>
<feature type="sequence conflict" description="In Ref. 1; AAC45337." evidence="2" ref="1">
    <original>T</original>
    <variation>I</variation>
    <location>
        <position position="17"/>
    </location>
</feature>
<feature type="sequence conflict" description="In Ref. 1; AAC45337." evidence="2" ref="1">
    <original>I</original>
    <variation>V</variation>
    <location>
        <position position="43"/>
    </location>
</feature>
<feature type="strand" evidence="4">
    <location>
        <begin position="3"/>
        <end position="7"/>
    </location>
</feature>
<feature type="helix" evidence="4">
    <location>
        <begin position="8"/>
        <end position="18"/>
    </location>
</feature>
<feature type="helix" evidence="4">
    <location>
        <begin position="19"/>
        <end position="21"/>
    </location>
</feature>
<feature type="helix" evidence="4">
    <location>
        <begin position="29"/>
        <end position="32"/>
    </location>
</feature>
<feature type="strand" evidence="4">
    <location>
        <begin position="33"/>
        <end position="38"/>
    </location>
</feature>
<feature type="strand" evidence="4">
    <location>
        <begin position="40"/>
        <end position="48"/>
    </location>
</feature>
<feature type="strand" evidence="4">
    <location>
        <begin position="50"/>
        <end position="59"/>
    </location>
</feature>
<feature type="turn" evidence="4">
    <location>
        <begin position="63"/>
        <end position="65"/>
    </location>
</feature>
<feature type="strand" evidence="4">
    <location>
        <begin position="68"/>
        <end position="71"/>
    </location>
</feature>
<feature type="strand" evidence="4">
    <location>
        <begin position="73"/>
        <end position="78"/>
    </location>
</feature>
<feature type="helix" evidence="4">
    <location>
        <begin position="79"/>
        <end position="88"/>
    </location>
</feature>
<feature type="strand" evidence="4">
    <location>
        <begin position="91"/>
        <end position="99"/>
    </location>
</feature>
<feature type="turn" evidence="4">
    <location>
        <begin position="100"/>
        <end position="102"/>
    </location>
</feature>
<feature type="strand" evidence="4">
    <location>
        <begin position="103"/>
        <end position="108"/>
    </location>
</feature>
<feature type="strand" evidence="4">
    <location>
        <begin position="111"/>
        <end position="116"/>
    </location>
</feature>
<feature type="helix" evidence="4">
    <location>
        <begin position="120"/>
        <end position="122"/>
    </location>
</feature>
<feature type="strand" evidence="4">
    <location>
        <begin position="135"/>
        <end position="138"/>
    </location>
</feature>
<feature type="helix" evidence="4">
    <location>
        <begin position="139"/>
        <end position="149"/>
    </location>
</feature>
<feature type="helix" evidence="4">
    <location>
        <begin position="150"/>
        <end position="152"/>
    </location>
</feature>
<feature type="helix" evidence="4">
    <location>
        <begin position="160"/>
        <end position="163"/>
    </location>
</feature>
<feature type="strand" evidence="4">
    <location>
        <begin position="164"/>
        <end position="170"/>
    </location>
</feature>
<feature type="turn" evidence="4">
    <location>
        <begin position="171"/>
        <end position="173"/>
    </location>
</feature>
<feature type="strand" evidence="4">
    <location>
        <begin position="174"/>
        <end position="180"/>
    </location>
</feature>
<feature type="strand" evidence="4">
    <location>
        <begin position="182"/>
        <end position="191"/>
    </location>
</feature>
<feature type="strand" evidence="4">
    <location>
        <begin position="199"/>
        <end position="204"/>
    </location>
</feature>
<feature type="helix" evidence="4">
    <location>
        <begin position="205"/>
        <end position="214"/>
    </location>
</feature>
<feature type="strand" evidence="4">
    <location>
        <begin position="221"/>
        <end position="226"/>
    </location>
</feature>
<feature type="strand" evidence="4">
    <location>
        <begin position="228"/>
        <end position="234"/>
    </location>
</feature>
<feature type="strand" evidence="4">
    <location>
        <begin position="236"/>
        <end position="243"/>
    </location>
</feature>
<feature type="helix" evidence="4">
    <location>
        <begin position="253"/>
        <end position="255"/>
    </location>
</feature>
<feature type="strand" evidence="4">
    <location>
        <begin position="261"/>
        <end position="267"/>
    </location>
</feature>
<feature type="helix" evidence="4">
    <location>
        <begin position="268"/>
        <end position="282"/>
    </location>
</feature>
<feature type="strand" evidence="4">
    <location>
        <begin position="285"/>
        <end position="287"/>
    </location>
</feature>
<feature type="strand" evidence="4">
    <location>
        <begin position="290"/>
        <end position="295"/>
    </location>
</feature>
<feature type="strand" evidence="4">
    <location>
        <begin position="298"/>
        <end position="305"/>
    </location>
</feature>
<feature type="turn" evidence="4">
    <location>
        <begin position="306"/>
        <end position="308"/>
    </location>
</feature>
<feature type="strand" evidence="4">
    <location>
        <begin position="309"/>
        <end position="315"/>
    </location>
</feature>
<feature type="strand" evidence="4">
    <location>
        <begin position="318"/>
        <end position="323"/>
    </location>
</feature>
<feature type="strand" evidence="4">
    <location>
        <begin position="325"/>
        <end position="329"/>
    </location>
</feature>
<feature type="helix" evidence="4">
    <location>
        <begin position="331"/>
        <end position="339"/>
    </location>
</feature>
<feature type="strand" evidence="4">
    <location>
        <begin position="343"/>
        <end position="351"/>
    </location>
</feature>
<feature type="strand" evidence="4">
    <location>
        <begin position="353"/>
        <end position="355"/>
    </location>
</feature>
<feature type="strand" evidence="4">
    <location>
        <begin position="357"/>
        <end position="363"/>
    </location>
</feature>
<feature type="strand" evidence="4">
    <location>
        <begin position="367"/>
        <end position="372"/>
    </location>
</feature>
<name>DPO3B_STRPN</name>
<protein>
    <recommendedName>
        <fullName>Beta sliding clamp</fullName>
        <shortName>Beta clamp</shortName>
        <shortName>Sliding clamp</shortName>
    </recommendedName>
    <alternativeName>
        <fullName>Beta-clamp processivity factor</fullName>
    </alternativeName>
    <alternativeName>
        <fullName>DNA polymerase III beta sliding clamp subunit</fullName>
    </alternativeName>
    <alternativeName>
        <fullName>DNA polymerase III subunit beta</fullName>
    </alternativeName>
</protein>
<dbReference type="EMBL" id="AF000658">
    <property type="protein sequence ID" value="AAC45337.1"/>
    <property type="molecule type" value="Genomic_DNA"/>
</dbReference>
<dbReference type="EMBL" id="AE005672">
    <property type="protein sequence ID" value="AAK74195.1"/>
    <property type="molecule type" value="Genomic_DNA"/>
</dbReference>
<dbReference type="PIR" id="B95000">
    <property type="entry name" value="B95000"/>
</dbReference>
<dbReference type="PIR" id="B97872">
    <property type="entry name" value="B97872"/>
</dbReference>
<dbReference type="RefSeq" id="WP_000581157.1">
    <property type="nucleotide sequence ID" value="NZ_CP155539.1"/>
</dbReference>
<dbReference type="PDB" id="2AWA">
    <property type="method" value="X-ray"/>
    <property type="resolution" value="2.50 A"/>
    <property type="chains" value="A/B/C/D=1-378"/>
</dbReference>
<dbReference type="PDBsum" id="2AWA"/>
<dbReference type="SMR" id="O06672"/>
<dbReference type="PaxDb" id="170187-SP_0002"/>
<dbReference type="DNASU" id="929739"/>
<dbReference type="EnsemblBacteria" id="AAK74195">
    <property type="protein sequence ID" value="AAK74195"/>
    <property type="gene ID" value="SP_0002"/>
</dbReference>
<dbReference type="GeneID" id="45652534"/>
<dbReference type="KEGG" id="spn:SP_0002"/>
<dbReference type="eggNOG" id="COG0592">
    <property type="taxonomic scope" value="Bacteria"/>
</dbReference>
<dbReference type="PhylomeDB" id="O06672"/>
<dbReference type="BioCyc" id="SPNE170187:G1FZB-2-MONOMER"/>
<dbReference type="EvolutionaryTrace" id="O06672"/>
<dbReference type="Proteomes" id="UP000000585">
    <property type="component" value="Chromosome"/>
</dbReference>
<dbReference type="GO" id="GO:0005737">
    <property type="term" value="C:cytoplasm"/>
    <property type="evidence" value="ECO:0007669"/>
    <property type="project" value="UniProtKB-SubCell"/>
</dbReference>
<dbReference type="GO" id="GO:0009360">
    <property type="term" value="C:DNA polymerase III complex"/>
    <property type="evidence" value="ECO:0007669"/>
    <property type="project" value="InterPro"/>
</dbReference>
<dbReference type="GO" id="GO:0008408">
    <property type="term" value="F:3'-5' exonuclease activity"/>
    <property type="evidence" value="ECO:0007669"/>
    <property type="project" value="InterPro"/>
</dbReference>
<dbReference type="GO" id="GO:0003677">
    <property type="term" value="F:DNA binding"/>
    <property type="evidence" value="ECO:0007669"/>
    <property type="project" value="UniProtKB-KW"/>
</dbReference>
<dbReference type="GO" id="GO:0003887">
    <property type="term" value="F:DNA-directed DNA polymerase activity"/>
    <property type="evidence" value="ECO:0007669"/>
    <property type="project" value="UniProtKB-KW"/>
</dbReference>
<dbReference type="GO" id="GO:0006271">
    <property type="term" value="P:DNA strand elongation involved in DNA replication"/>
    <property type="evidence" value="ECO:0007669"/>
    <property type="project" value="TreeGrafter"/>
</dbReference>
<dbReference type="CDD" id="cd00140">
    <property type="entry name" value="beta_clamp"/>
    <property type="match status" value="1"/>
</dbReference>
<dbReference type="Gene3D" id="3.70.10.10">
    <property type="match status" value="1"/>
</dbReference>
<dbReference type="Gene3D" id="3.10.150.10">
    <property type="entry name" value="DNA Polymerase III, subunit A, domain 2"/>
    <property type="match status" value="1"/>
</dbReference>
<dbReference type="InterPro" id="IPR046938">
    <property type="entry name" value="DNA_clamp_sf"/>
</dbReference>
<dbReference type="InterPro" id="IPR001001">
    <property type="entry name" value="DNA_polIII_beta"/>
</dbReference>
<dbReference type="InterPro" id="IPR022635">
    <property type="entry name" value="DNA_polIII_beta_C"/>
</dbReference>
<dbReference type="InterPro" id="IPR022637">
    <property type="entry name" value="DNA_polIII_beta_cen"/>
</dbReference>
<dbReference type="InterPro" id="IPR022634">
    <property type="entry name" value="DNA_polIII_beta_N"/>
</dbReference>
<dbReference type="NCBIfam" id="TIGR00663">
    <property type="entry name" value="dnan"/>
    <property type="match status" value="1"/>
</dbReference>
<dbReference type="PANTHER" id="PTHR30478:SF0">
    <property type="entry name" value="BETA SLIDING CLAMP"/>
    <property type="match status" value="1"/>
</dbReference>
<dbReference type="PANTHER" id="PTHR30478">
    <property type="entry name" value="DNA POLYMERASE III SUBUNIT BETA"/>
    <property type="match status" value="1"/>
</dbReference>
<dbReference type="Pfam" id="PF00712">
    <property type="entry name" value="DNA_pol3_beta"/>
    <property type="match status" value="1"/>
</dbReference>
<dbReference type="Pfam" id="PF02767">
    <property type="entry name" value="DNA_pol3_beta_2"/>
    <property type="match status" value="1"/>
</dbReference>
<dbReference type="Pfam" id="PF02768">
    <property type="entry name" value="DNA_pol3_beta_3"/>
    <property type="match status" value="1"/>
</dbReference>
<dbReference type="PIRSF" id="PIRSF000804">
    <property type="entry name" value="DNA_pol_III_b"/>
    <property type="match status" value="1"/>
</dbReference>
<dbReference type="SMART" id="SM00480">
    <property type="entry name" value="POL3Bc"/>
    <property type="match status" value="1"/>
</dbReference>
<dbReference type="SUPFAM" id="SSF55979">
    <property type="entry name" value="DNA clamp"/>
    <property type="match status" value="3"/>
</dbReference>
<accession>O06672</accession>
<comment type="function">
    <text evidence="1">Confers DNA tethering and processivity to DNA polymerases and other proteins. Acts as a clamp, forming a ring around DNA (a reaction catalyzed by the clamp-loading complex) which diffuses in an ATP-independent manner freely and bidirectionally along dsDNA. Initially characterized for its ability to contact the catalytic subunit of DNA polymerase III (Pol III), a complex, multichain enzyme responsible for most of the replicative synthesis in bacteria; Pol III exhibits 3'-5' exonuclease proofreading activity. The beta chain is required for initiation of replication as well as for processivity of DNA replication.</text>
</comment>
<comment type="subunit">
    <text evidence="1">Forms a ring-shaped head-to-tail homodimer around DNA which binds and tethers DNA polymerases and other proteins to the DNA. The DNA replisome complex has a single clamp-loading complex (3 tau and 1 each of delta, delta', psi and chi subunits) which binds 3 Pol III cores (1 core on the leading strand and 2 on the lagging strand) each with a beta sliding clamp dimer. Additional proteins in the replisome are other copies of gamma, psi and chi, Ssb, DNA helicase and RNA primase.</text>
</comment>
<comment type="subcellular location">
    <subcellularLocation>
        <location evidence="1">Cytoplasm</location>
    </subcellularLocation>
</comment>
<comment type="similarity">
    <text evidence="2">Belongs to the beta sliding clamp family.</text>
</comment>